<sequence length="199" mass="22464">MESFVTPQRRSAAEQEPKPTANIENIVATVSLDQTLDLNLIERSILTVEYNPEQFPGLVYRLDSPKVTALIFKSGKMVVTGAKSTRDLIEAVKKIVRNLKKHGIQIYGRPKVQIQNIVASANLNVCVDLERAALTLENSMYEPEQFPGLIHRMDEPRVVLLIFSSGKMVITGAKREEEVYEAVNKIYEKLKKLRAIRPC</sequence>
<accession>P58177</accession>
<comment type="function">
    <text evidence="1">General factor that plays a role in the activation of archaeal genes transcribed by RNA polymerase. Binds specifically to the TATA box promoter element which lies close to the position of transcription initiation (By similarity).</text>
</comment>
<comment type="similarity">
    <text evidence="2">Belongs to the TBP family.</text>
</comment>
<gene>
    <name type="primary">tbp</name>
</gene>
<protein>
    <recommendedName>
        <fullName>TATA-box-binding protein</fullName>
    </recommendedName>
    <alternativeName>
        <fullName>Box A-binding protein</fullName>
        <shortName>BAP</shortName>
    </alternativeName>
    <alternativeName>
        <fullName>TATA sequence-binding protein</fullName>
        <shortName>TBP</shortName>
    </alternativeName>
    <alternativeName>
        <fullName>TATA-box factor</fullName>
    </alternativeName>
</protein>
<dbReference type="EMBL" id="AF367981">
    <property type="protein sequence ID" value="AAK38723.1"/>
    <property type="molecule type" value="Genomic_DNA"/>
</dbReference>
<dbReference type="SMR" id="P58177"/>
<dbReference type="STRING" id="2309.CF15_03725"/>
<dbReference type="GO" id="GO:0003677">
    <property type="term" value="F:DNA binding"/>
    <property type="evidence" value="ECO:0007669"/>
    <property type="project" value="UniProtKB-KW"/>
</dbReference>
<dbReference type="GO" id="GO:0003700">
    <property type="term" value="F:DNA-binding transcription factor activity"/>
    <property type="evidence" value="ECO:0007669"/>
    <property type="project" value="UniProtKB-UniRule"/>
</dbReference>
<dbReference type="GO" id="GO:0006352">
    <property type="term" value="P:DNA-templated transcription initiation"/>
    <property type="evidence" value="ECO:0007669"/>
    <property type="project" value="InterPro"/>
</dbReference>
<dbReference type="CDD" id="cd04518">
    <property type="entry name" value="TBP_archaea"/>
    <property type="match status" value="1"/>
</dbReference>
<dbReference type="FunFam" id="3.30.310.10:FF:000007">
    <property type="entry name" value="TATA-box-binding protein"/>
    <property type="match status" value="1"/>
</dbReference>
<dbReference type="FunFam" id="3.30.310.10:FF:000010">
    <property type="entry name" value="TATA-box-binding protein"/>
    <property type="match status" value="1"/>
</dbReference>
<dbReference type="Gene3D" id="3.30.310.10">
    <property type="entry name" value="TATA-Binding Protein"/>
    <property type="match status" value="2"/>
</dbReference>
<dbReference type="HAMAP" id="MF_00408">
    <property type="entry name" value="TATA_bind_prot_arch"/>
    <property type="match status" value="1"/>
</dbReference>
<dbReference type="InterPro" id="IPR000814">
    <property type="entry name" value="TBP"/>
</dbReference>
<dbReference type="InterPro" id="IPR033711">
    <property type="entry name" value="TBP_archaea"/>
</dbReference>
<dbReference type="InterPro" id="IPR030491">
    <property type="entry name" value="TBP_CS"/>
</dbReference>
<dbReference type="InterPro" id="IPR012295">
    <property type="entry name" value="TBP_dom_sf"/>
</dbReference>
<dbReference type="NCBIfam" id="NF001592">
    <property type="entry name" value="PRK00394.1-1"/>
    <property type="match status" value="1"/>
</dbReference>
<dbReference type="NCBIfam" id="NF001593">
    <property type="entry name" value="PRK00394.1-2"/>
    <property type="match status" value="1"/>
</dbReference>
<dbReference type="PANTHER" id="PTHR10126">
    <property type="entry name" value="TATA-BOX BINDING PROTEIN"/>
    <property type="match status" value="1"/>
</dbReference>
<dbReference type="Pfam" id="PF00352">
    <property type="entry name" value="TBP"/>
    <property type="match status" value="2"/>
</dbReference>
<dbReference type="PRINTS" id="PR00686">
    <property type="entry name" value="TIFACTORIID"/>
</dbReference>
<dbReference type="SUPFAM" id="SSF55945">
    <property type="entry name" value="TATA-box binding protein-like"/>
    <property type="match status" value="2"/>
</dbReference>
<dbReference type="PROSITE" id="PS00351">
    <property type="entry name" value="TFIID"/>
    <property type="match status" value="2"/>
</dbReference>
<organism>
    <name type="scientific">Pyrodictium occultum</name>
    <dbReference type="NCBI Taxonomy" id="2309"/>
    <lineage>
        <taxon>Archaea</taxon>
        <taxon>Thermoproteota</taxon>
        <taxon>Thermoprotei</taxon>
        <taxon>Desulfurococcales</taxon>
        <taxon>Pyrodictiaceae</taxon>
        <taxon>Pyrodictium</taxon>
    </lineage>
</organism>
<reference key="1">
    <citation type="submission" date="2001-04" db="EMBL/GenBank/DDBJ databases">
        <title>Characterization of transcription factors in the hyperthermophilic archaeon Pyrodictium occultum.</title>
        <authorList>
            <person name="Lindner P."/>
            <person name="Frey G."/>
            <person name="Stetter K.O."/>
        </authorList>
    </citation>
    <scope>NUCLEOTIDE SEQUENCE [GENOMIC DNA]</scope>
    <source>
        <strain>PL 19</strain>
    </source>
</reference>
<proteinExistence type="inferred from homology"/>
<feature type="chain" id="PRO_0000154022" description="TATA-box-binding protein">
    <location>
        <begin position="1"/>
        <end position="199"/>
    </location>
</feature>
<feature type="repeat" description="1">
    <location>
        <begin position="23"/>
        <end position="99"/>
    </location>
</feature>
<feature type="repeat" description="2">
    <location>
        <begin position="114"/>
        <end position="190"/>
    </location>
</feature>
<name>TBP_PYROC</name>
<evidence type="ECO:0000250" key="1"/>
<evidence type="ECO:0000305" key="2"/>
<keyword id="KW-0238">DNA-binding</keyword>
<keyword id="KW-0677">Repeat</keyword>
<keyword id="KW-0804">Transcription</keyword>
<keyword id="KW-0805">Transcription regulation</keyword>